<sequence length="728" mass="81559">MCGSDDSFDDFVPDSQEPASSRTRNQDHLDDDEVPCSQRPDAANDTMVEDLDEGDEPAHDESEDIIKILVATDIHCGYGENKANIHMDAVNTFEEVLQIATEQKVDMILLGGDLFHENNPSREVQHRVTQLLRQYCLNGNPIALEFLSDASVNFNQSVFGHVNYYDQNLNVGLPIFTIHGNHDDLSGKGLTALDLLHESGLVNLFGKHSNIQEFIVSPILLRKGETRLALYGIGSQRDDRLVRAFKNNSISFLRPNAGAEDWFNLFVLHQNRPRRAMHRSTGNFLPESLIPQFFDLLIWGHEHECKPDPQYVASSEAVGDGFYILQPGSTVATSLTPEEALQKNAFLIKIKGRKFASKPIPLQTVRPMVCDELLLDKIPPGSRPILKTDRPKHTDGRYIDEIAIEAKINEMITTAKAKRRPRQPELPLIRLKVIYDGDWLNITPANAKRIGLRYENVVANAVDMVFIKKNNKPKEGKLQTENEKNITEMADEMGQVSATNLQTIINDYFINQPLVDQMTVLKPIGIGRALEQYSAIEEGGLATSANRNFDSCLMHQIDVVRKTLKKMPLPPINDPSDLDKFRDLITKDLYDMKKADSERFKNPVADVEMEEDEDDPQYYMPPQSTSRTNYASGSEDEVANSDEEMGSSISRHSKQPTTRGRGRGARGAGASRETTRGRSNKVVSTRQIDSDGFEIINDSPSPPPASRSTRGKARGKSAPSKKRDLSFF</sequence>
<name>MRE11_CAEEL</name>
<evidence type="ECO:0000250" key="1">
    <source>
        <dbReference type="UniProtKB" id="P32829"/>
    </source>
</evidence>
<evidence type="ECO:0000250" key="2">
    <source>
        <dbReference type="UniProtKB" id="P49959"/>
    </source>
</evidence>
<evidence type="ECO:0000250" key="3">
    <source>
        <dbReference type="UniProtKB" id="Q61216"/>
    </source>
</evidence>
<evidence type="ECO:0000255" key="4">
    <source>
        <dbReference type="RuleBase" id="RU003447"/>
    </source>
</evidence>
<evidence type="ECO:0000256" key="5">
    <source>
        <dbReference type="SAM" id="MobiDB-lite"/>
    </source>
</evidence>
<evidence type="ECO:0000269" key="6">
    <source>
    </source>
</evidence>
<evidence type="ECO:0000269" key="7">
    <source>
    </source>
</evidence>
<evidence type="ECO:0000312" key="8">
    <source>
        <dbReference type="WormBase" id="ZC302.1"/>
    </source>
</evidence>
<reference key="1">
    <citation type="journal article" date="2001" name="Genes Dev.">
        <title>C. elegans mre-11 is required for meiotic recombination and DNA repair but is dispensable for the meiotic G(2) DNA damage checkpoint.</title>
        <authorList>
            <person name="Chin G.M."/>
            <person name="Villeneuve A.M."/>
        </authorList>
    </citation>
    <scope>NUCLEOTIDE SEQUENCE [GENOMIC DNA]</scope>
    <scope>FUNCTION</scope>
    <scope>SUBCELLULAR LOCATION</scope>
    <scope>MUTAGENESIS OF GLU-95</scope>
</reference>
<reference key="2">
    <citation type="journal article" date="1998" name="Science">
        <title>Genome sequence of the nematode C. elegans: a platform for investigating biology.</title>
        <authorList>
            <consortium name="The C. elegans sequencing consortium"/>
        </authorList>
    </citation>
    <scope>NUCLEOTIDE SEQUENCE [LARGE SCALE GENOMIC DNA]</scope>
    <source>
        <strain>Bristol N2</strain>
    </source>
</reference>
<reference key="3">
    <citation type="journal article" date="2006" name="EMBO J.">
        <title>A conserved pathway to activate BRCA1-dependent ubiquitylation at DNA damage sites.</title>
        <authorList>
            <person name="Polanowska J."/>
            <person name="Martin J.S."/>
            <person name="Garcia-Muse T."/>
            <person name="Petalcorin M.I.R."/>
            <person name="Boulton S.J."/>
        </authorList>
    </citation>
    <scope>FUNCTION</scope>
    <scope>DISRUPTION PHENOTYPE</scope>
</reference>
<protein>
    <recommendedName>
        <fullName>Double-strand break repair protein mre-11</fullName>
    </recommendedName>
</protein>
<accession>Q23255</accession>
<gene>
    <name evidence="8" type="primary">mre-11</name>
    <name evidence="8" type="ORF">ZC302.1</name>
</gene>
<comment type="function">
    <text evidence="2 6 7">Core component of the MRN complex, which plays a central role in double-strand break (DSB) repair, DNA recombination, maintenance of telomere integrity and meiosis (PubMed:11238374, PubMed:16628214). The MRN complex is involved in the repair of DNA double-strand breaks (DSBs) via homologous recombination (HR), an error-free mechanism which primarily occurs during S and G2 phases (PubMed:11238374, PubMed:16628214). The complex (1) mediates the end resection of damaged DNA, which generates proper single-stranded DNA, a key initial steps in HR, and is (2) required for the recruitment of other repair factors and efficient activation of ATM and ATR upon DNA damage (By similarity). Within the MRN complex, mre-11 possesses both single-strand endonuclease activity and double-strand-specific 3'-5' exonuclease activity (By similarity). Mre-11 first endonucleolytically cleaves the 5' strand at DNA DSB ends to prevent non-homologous end joining (NHEJ) and licence HR (By similarity). It then generates a single-stranded DNA gap via 3' to 5' exonucleolytic degradation, which is required for single-strand invasion and recombination (By similarity). Required for meiotic crossing over and chiasma formation. Pachytene morphology and homolog pairing are normal (PubMed:11238374). Vital in long term for maintenance of reproductive capacity of subsequent generations (PubMed:11238374).</text>
</comment>
<comment type="cofactor">
    <cofactor evidence="1">
        <name>Mn(2+)</name>
        <dbReference type="ChEBI" id="CHEBI:29035"/>
    </cofactor>
</comment>
<comment type="subunit">
    <text evidence="1">Component of the MRN complex composed of two heterodimers rad-50 and mre-11 associated with a single nbs-1.</text>
</comment>
<comment type="subcellular location">
    <subcellularLocation>
        <location evidence="6">Nucleus</location>
    </subcellularLocation>
    <subcellularLocation>
        <location evidence="2">Chromosome</location>
    </subcellularLocation>
    <text evidence="2">Localizes to DNA double-strand breaks (DSBs).</text>
</comment>
<comment type="disruption phenotype">
    <text evidence="7">RNAi-mediated knockdown results in DNA damage repair defects following ionizing radiation with reduced ubiquitination at DNA damage sites.</text>
</comment>
<comment type="similarity">
    <text evidence="4 6">Belongs to the MRE11/RAD32 family.</text>
</comment>
<dbReference type="EMBL" id="Z73978">
    <property type="protein sequence ID" value="CAA98292.2"/>
    <property type="molecule type" value="Genomic_DNA"/>
</dbReference>
<dbReference type="PIR" id="T27512">
    <property type="entry name" value="T27512"/>
</dbReference>
<dbReference type="RefSeq" id="NP_505736.2">
    <property type="nucleotide sequence ID" value="NM_073335.8"/>
</dbReference>
<dbReference type="SMR" id="Q23255"/>
<dbReference type="BioGRID" id="44517">
    <property type="interactions" value="19"/>
</dbReference>
<dbReference type="FunCoup" id="Q23255">
    <property type="interactions" value="2916"/>
</dbReference>
<dbReference type="IntAct" id="Q23255">
    <property type="interactions" value="3"/>
</dbReference>
<dbReference type="MINT" id="Q23255"/>
<dbReference type="STRING" id="6239.ZC302.1.2"/>
<dbReference type="iPTMnet" id="Q23255"/>
<dbReference type="PaxDb" id="6239-ZC302.1.1"/>
<dbReference type="PeptideAtlas" id="Q23255"/>
<dbReference type="EnsemblMetazoa" id="ZC302.1.1">
    <property type="protein sequence ID" value="ZC302.1.1"/>
    <property type="gene ID" value="WBGene00003405"/>
</dbReference>
<dbReference type="EnsemblMetazoa" id="ZC302.1.2">
    <property type="protein sequence ID" value="ZC302.1.2"/>
    <property type="gene ID" value="WBGene00003405"/>
</dbReference>
<dbReference type="GeneID" id="179488"/>
<dbReference type="KEGG" id="cel:CELE_ZC302.1"/>
<dbReference type="UCSC" id="ZC302.1.1">
    <property type="organism name" value="c. elegans"/>
</dbReference>
<dbReference type="AGR" id="WB:WBGene00003405"/>
<dbReference type="CTD" id="179488"/>
<dbReference type="WormBase" id="ZC302.1">
    <property type="protein sequence ID" value="CE37459"/>
    <property type="gene ID" value="WBGene00003405"/>
    <property type="gene designation" value="mre-11"/>
</dbReference>
<dbReference type="eggNOG" id="KOG2310">
    <property type="taxonomic scope" value="Eukaryota"/>
</dbReference>
<dbReference type="GeneTree" id="ENSGT00390000017288"/>
<dbReference type="HOGENOM" id="CLU_009535_3_0_1"/>
<dbReference type="InParanoid" id="Q23255"/>
<dbReference type="OMA" id="QNHTGHT"/>
<dbReference type="OrthoDB" id="30417at2759"/>
<dbReference type="PhylomeDB" id="Q23255"/>
<dbReference type="Reactome" id="R-CEL-1834949">
    <property type="pathway name" value="Cytosolic sensors of pathogen-associated DNA"/>
</dbReference>
<dbReference type="Reactome" id="R-CEL-5685939">
    <property type="pathway name" value="HDR through MMEJ (alt-NHEJ)"/>
</dbReference>
<dbReference type="Reactome" id="R-CEL-5693548">
    <property type="pathway name" value="Sensing of DNA Double Strand Breaks"/>
</dbReference>
<dbReference type="Reactome" id="R-CEL-5693607">
    <property type="pathway name" value="Processing of DNA double-strand break ends"/>
</dbReference>
<dbReference type="PRO" id="PR:Q23255"/>
<dbReference type="Proteomes" id="UP000001940">
    <property type="component" value="Chromosome V"/>
</dbReference>
<dbReference type="Bgee" id="WBGene00003405">
    <property type="expression patterns" value="Expressed in germ line (C elegans) and 4 other cell types or tissues"/>
</dbReference>
<dbReference type="GO" id="GO:0030870">
    <property type="term" value="C:Mre11 complex"/>
    <property type="evidence" value="ECO:0000318"/>
    <property type="project" value="GO_Central"/>
</dbReference>
<dbReference type="GO" id="GO:0005634">
    <property type="term" value="C:nucleus"/>
    <property type="evidence" value="ECO:0000314"/>
    <property type="project" value="WormBase"/>
</dbReference>
<dbReference type="GO" id="GO:0035861">
    <property type="term" value="C:site of double-strand break"/>
    <property type="evidence" value="ECO:0000318"/>
    <property type="project" value="GO_Central"/>
</dbReference>
<dbReference type="GO" id="GO:0008296">
    <property type="term" value="F:3'-5'-DNA exonuclease activity"/>
    <property type="evidence" value="ECO:0007669"/>
    <property type="project" value="InterPro"/>
</dbReference>
<dbReference type="GO" id="GO:0030145">
    <property type="term" value="F:manganese ion binding"/>
    <property type="evidence" value="ECO:0007669"/>
    <property type="project" value="InterPro"/>
</dbReference>
<dbReference type="GO" id="GO:0000014">
    <property type="term" value="F:single-stranded DNA endodeoxyribonuclease activity"/>
    <property type="evidence" value="ECO:0000318"/>
    <property type="project" value="GO_Central"/>
</dbReference>
<dbReference type="GO" id="GO:0000724">
    <property type="term" value="P:double-strand break repair via homologous recombination"/>
    <property type="evidence" value="ECO:0000318"/>
    <property type="project" value="GO_Central"/>
</dbReference>
<dbReference type="GO" id="GO:0006303">
    <property type="term" value="P:double-strand break repair via nonhomologous end joining"/>
    <property type="evidence" value="ECO:0000318"/>
    <property type="project" value="GO_Central"/>
</dbReference>
<dbReference type="GO" id="GO:0042138">
    <property type="term" value="P:meiotic DNA double-strand break formation"/>
    <property type="evidence" value="ECO:0000318"/>
    <property type="project" value="GO_Central"/>
</dbReference>
<dbReference type="GO" id="GO:0097552">
    <property type="term" value="P:mitochondrial double-strand break repair via homologous recombination"/>
    <property type="evidence" value="ECO:0000318"/>
    <property type="project" value="GO_Central"/>
</dbReference>
<dbReference type="GO" id="GO:0007095">
    <property type="term" value="P:mitotic G2 DNA damage checkpoint signaling"/>
    <property type="evidence" value="ECO:0000318"/>
    <property type="project" value="GO_Central"/>
</dbReference>
<dbReference type="GO" id="GO:0031573">
    <property type="term" value="P:mitotic intra-S DNA damage checkpoint signaling"/>
    <property type="evidence" value="ECO:0000318"/>
    <property type="project" value="GO_Central"/>
</dbReference>
<dbReference type="GO" id="GO:0000723">
    <property type="term" value="P:telomere maintenance"/>
    <property type="evidence" value="ECO:0000318"/>
    <property type="project" value="GO_Central"/>
</dbReference>
<dbReference type="CDD" id="cd00840">
    <property type="entry name" value="MPP_Mre11_N"/>
    <property type="match status" value="1"/>
</dbReference>
<dbReference type="FunFam" id="3.30.110.110:FF:000010">
    <property type="entry name" value="Double-strand break repair protein"/>
    <property type="match status" value="1"/>
</dbReference>
<dbReference type="FunFam" id="3.60.21.10:FF:000011">
    <property type="entry name" value="Double-strand break repair protein"/>
    <property type="match status" value="1"/>
</dbReference>
<dbReference type="Gene3D" id="3.60.21.10">
    <property type="match status" value="1"/>
</dbReference>
<dbReference type="Gene3D" id="3.30.110.110">
    <property type="entry name" value="Mre11, capping domain"/>
    <property type="match status" value="1"/>
</dbReference>
<dbReference type="InterPro" id="IPR004843">
    <property type="entry name" value="Calcineurin-like_PHP_ApaH"/>
</dbReference>
<dbReference type="InterPro" id="IPR029052">
    <property type="entry name" value="Metallo-depent_PP-like"/>
</dbReference>
<dbReference type="InterPro" id="IPR003701">
    <property type="entry name" value="Mre11"/>
</dbReference>
<dbReference type="InterPro" id="IPR038487">
    <property type="entry name" value="Mre11_capping_dom"/>
</dbReference>
<dbReference type="InterPro" id="IPR007281">
    <property type="entry name" value="Mre11_DNA-bd"/>
</dbReference>
<dbReference type="InterPro" id="IPR041796">
    <property type="entry name" value="Mre11_N"/>
</dbReference>
<dbReference type="NCBIfam" id="TIGR00583">
    <property type="entry name" value="mre11"/>
    <property type="match status" value="1"/>
</dbReference>
<dbReference type="PANTHER" id="PTHR10139">
    <property type="entry name" value="DOUBLE-STRAND BREAK REPAIR PROTEIN MRE11"/>
    <property type="match status" value="1"/>
</dbReference>
<dbReference type="PANTHER" id="PTHR10139:SF1">
    <property type="entry name" value="DOUBLE-STRAND BREAK REPAIR PROTEIN MRE11"/>
    <property type="match status" value="1"/>
</dbReference>
<dbReference type="Pfam" id="PF00149">
    <property type="entry name" value="Metallophos"/>
    <property type="match status" value="1"/>
</dbReference>
<dbReference type="Pfam" id="PF04152">
    <property type="entry name" value="Mre11_DNA_bind"/>
    <property type="match status" value="1"/>
</dbReference>
<dbReference type="PIRSF" id="PIRSF000882">
    <property type="entry name" value="DSB_repair_MRE11"/>
    <property type="match status" value="1"/>
</dbReference>
<dbReference type="SMART" id="SM01347">
    <property type="entry name" value="Mre11_DNA_bind"/>
    <property type="match status" value="1"/>
</dbReference>
<dbReference type="SUPFAM" id="SSF56300">
    <property type="entry name" value="Metallo-dependent phosphatases"/>
    <property type="match status" value="1"/>
</dbReference>
<organism>
    <name type="scientific">Caenorhabditis elegans</name>
    <dbReference type="NCBI Taxonomy" id="6239"/>
    <lineage>
        <taxon>Eukaryota</taxon>
        <taxon>Metazoa</taxon>
        <taxon>Ecdysozoa</taxon>
        <taxon>Nematoda</taxon>
        <taxon>Chromadorea</taxon>
        <taxon>Rhabditida</taxon>
        <taxon>Rhabditina</taxon>
        <taxon>Rhabditomorpha</taxon>
        <taxon>Rhabditoidea</taxon>
        <taxon>Rhabditidae</taxon>
        <taxon>Peloderinae</taxon>
        <taxon>Caenorhabditis</taxon>
    </lineage>
</organism>
<feature type="chain" id="PRO_0000138678" description="Double-strand break repair protein mre-11">
    <location>
        <begin position="1"/>
        <end position="728"/>
    </location>
</feature>
<feature type="region of interest" description="Disordered" evidence="5">
    <location>
        <begin position="1"/>
        <end position="45"/>
    </location>
</feature>
<feature type="region of interest" description="Disordered" evidence="5">
    <location>
        <begin position="601"/>
        <end position="728"/>
    </location>
</feature>
<feature type="compositionally biased region" description="Acidic residues" evidence="5">
    <location>
        <begin position="1"/>
        <end position="12"/>
    </location>
</feature>
<feature type="compositionally biased region" description="Acidic residues" evidence="5">
    <location>
        <begin position="607"/>
        <end position="616"/>
    </location>
</feature>
<feature type="compositionally biased region" description="Polar residues" evidence="5">
    <location>
        <begin position="622"/>
        <end position="632"/>
    </location>
</feature>
<feature type="compositionally biased region" description="Acidic residues" evidence="5">
    <location>
        <begin position="634"/>
        <end position="645"/>
    </location>
</feature>
<feature type="active site" description="Proton donor" evidence="3">
    <location>
        <position position="182"/>
    </location>
</feature>
<feature type="binding site" evidence="2">
    <location>
        <position position="73"/>
    </location>
    <ligand>
        <name>Mn(2+)</name>
        <dbReference type="ChEBI" id="CHEBI:29035"/>
        <label>1</label>
    </ligand>
</feature>
<feature type="binding site" evidence="2">
    <location>
        <position position="75"/>
    </location>
    <ligand>
        <name>Mn(2+)</name>
        <dbReference type="ChEBI" id="CHEBI:29035"/>
        <label>1</label>
    </ligand>
</feature>
<feature type="binding site" evidence="2">
    <location>
        <position position="113"/>
    </location>
    <ligand>
        <name>Mn(2+)</name>
        <dbReference type="ChEBI" id="CHEBI:29035"/>
        <label>1</label>
    </ligand>
</feature>
<feature type="binding site" evidence="2">
    <location>
        <position position="113"/>
    </location>
    <ligand>
        <name>Mn(2+)</name>
        <dbReference type="ChEBI" id="CHEBI:29035"/>
        <label>2</label>
    </ligand>
</feature>
<feature type="binding site" evidence="2">
    <location>
        <position position="181"/>
    </location>
    <ligand>
        <name>Mn(2+)</name>
        <dbReference type="ChEBI" id="CHEBI:29035"/>
        <label>2</label>
    </ligand>
</feature>
<feature type="binding site" evidence="2">
    <location>
        <position position="269"/>
    </location>
    <ligand>
        <name>Mn(2+)</name>
        <dbReference type="ChEBI" id="CHEBI:29035"/>
        <label>2</label>
    </ligand>
</feature>
<feature type="binding site" evidence="2">
    <location>
        <position position="301"/>
    </location>
    <ligand>
        <name>Mn(2+)</name>
        <dbReference type="ChEBI" id="CHEBI:29035"/>
        <label>2</label>
    </ligand>
</feature>
<feature type="binding site" evidence="2">
    <location>
        <position position="303"/>
    </location>
    <ligand>
        <name>Mn(2+)</name>
        <dbReference type="ChEBI" id="CHEBI:29035"/>
        <label>1</label>
    </ligand>
</feature>
<feature type="mutagenesis site" description="In mre-11-ME41; defective in meiotic chromosome degradation." evidence="6">
    <original>E</original>
    <variation>K</variation>
    <location>
        <position position="95"/>
    </location>
</feature>
<proteinExistence type="evidence at protein level"/>
<keyword id="KW-0158">Chromosome</keyword>
<keyword id="KW-0227">DNA damage</keyword>
<keyword id="KW-0234">DNA repair</keyword>
<keyword id="KW-0255">Endonuclease</keyword>
<keyword id="KW-0269">Exonuclease</keyword>
<keyword id="KW-0378">Hydrolase</keyword>
<keyword id="KW-0464">Manganese</keyword>
<keyword id="KW-0469">Meiosis</keyword>
<keyword id="KW-0479">Metal-binding</keyword>
<keyword id="KW-0540">Nuclease</keyword>
<keyword id="KW-0539">Nucleus</keyword>
<keyword id="KW-1185">Reference proteome</keyword>